<evidence type="ECO:0000256" key="1">
    <source>
        <dbReference type="SAM" id="MobiDB-lite"/>
    </source>
</evidence>
<accession>Q9DUC5</accession>
<keyword id="KW-1185">Reference proteome</keyword>
<organismHost>
    <name type="scientific">Homo sapiens</name>
    <name type="common">Human</name>
    <dbReference type="NCBI Taxonomy" id="9606"/>
</organismHost>
<name>YORF2_TTVV9</name>
<feature type="chain" id="PRO_0000315349" description="Uncharacterized ORF2 protein">
    <location>
        <begin position="1"/>
        <end position="136"/>
    </location>
</feature>
<feature type="region of interest" description="Disordered" evidence="1">
    <location>
        <begin position="46"/>
        <end position="136"/>
    </location>
</feature>
<feature type="compositionally biased region" description="Gly residues" evidence="1">
    <location>
        <begin position="99"/>
        <end position="108"/>
    </location>
</feature>
<feature type="compositionally biased region" description="Acidic residues" evidence="1">
    <location>
        <begin position="123"/>
        <end position="136"/>
    </location>
</feature>
<proteinExistence type="predicted"/>
<reference key="1">
    <citation type="journal article" date="2000" name="Virology">
        <title>Species-specific TT viruses in humans and nonhuman primates and their phylogenetic relatedness.</title>
        <authorList>
            <person name="Okamoto H."/>
            <person name="Nishizawa T."/>
            <person name="Tawara A."/>
            <person name="Peng Y."/>
            <person name="Takahashi M."/>
            <person name="Kishimoto J."/>
            <person name="Tanaka T."/>
            <person name="Miyakawa Y."/>
            <person name="Mayumi M."/>
        </authorList>
    </citation>
    <scope>NUCLEOTIDE SEQUENCE [GENOMIC DNA]</scope>
</reference>
<reference key="2">
    <citation type="journal article" date="2007" name="Rev. Med. Virol.">
        <title>Torque teno virus (TTV): current status.</title>
        <authorList>
            <person name="Hino S."/>
            <person name="Miyata H."/>
        </authorList>
    </citation>
    <scope>REVIEW</scope>
</reference>
<sequence>MTNQWEPTTLNAWGREEAWLRSVVDSHQSFCGCNDPGFHLGLLLHSAGRHLGGPGGPQPPPAPGGPGVGGEGPRRFLPLPGLPANPEEPGHQRPPCPGGPGDAGGAGGVDAETGEGEWRPEDIAELLDGLEDAEKR</sequence>
<gene>
    <name type="ORF">ORF2</name>
</gene>
<protein>
    <recommendedName>
        <fullName>Uncharacterized ORF2 protein</fullName>
    </recommendedName>
</protein>
<organism>
    <name type="scientific">Torque teno virus (isolate Japanese macaque/Japan/Mf-TTV9/2000)</name>
    <name type="common">TTV</name>
    <dbReference type="NCBI Taxonomy" id="687364"/>
    <lineage>
        <taxon>Viruses</taxon>
        <taxon>Viruses incertae sedis</taxon>
        <taxon>Anelloviridae</taxon>
        <taxon>Alphatorquevirus</taxon>
        <taxon>Alphatorquevirus cerco7</taxon>
    </lineage>
</organism>
<dbReference type="EMBL" id="AB041959">
    <property type="protein sequence ID" value="BAB19312.1"/>
    <property type="molecule type" value="Genomic_DNA"/>
</dbReference>
<dbReference type="RefSeq" id="YP_003587872.1">
    <property type="nucleotide sequence ID" value="NC_014083.1"/>
</dbReference>
<dbReference type="KEGG" id="vg:9086636"/>
<dbReference type="OrthoDB" id="27134at10239"/>
<dbReference type="Proteomes" id="UP000008261">
    <property type="component" value="Genome"/>
</dbReference>
<dbReference type="InterPro" id="IPR004118">
    <property type="entry name" value="HEV_TT_vir_Orf2/Gyrovir_Vp2_N"/>
</dbReference>
<dbReference type="Pfam" id="PF02957">
    <property type="entry name" value="TT_ORF2-like"/>
    <property type="match status" value="1"/>
</dbReference>